<proteinExistence type="inferred from homology"/>
<accession>A1W341</accession>
<protein>
    <recommendedName>
        <fullName evidence="1">UPF0102 protein Ajs_0414</fullName>
    </recommendedName>
</protein>
<comment type="similarity">
    <text evidence="1">Belongs to the UPF0102 family.</text>
</comment>
<organism>
    <name type="scientific">Acidovorax sp. (strain JS42)</name>
    <dbReference type="NCBI Taxonomy" id="232721"/>
    <lineage>
        <taxon>Bacteria</taxon>
        <taxon>Pseudomonadati</taxon>
        <taxon>Pseudomonadota</taxon>
        <taxon>Betaproteobacteria</taxon>
        <taxon>Burkholderiales</taxon>
        <taxon>Comamonadaceae</taxon>
        <taxon>Acidovorax</taxon>
    </lineage>
</organism>
<dbReference type="EMBL" id="CP000539">
    <property type="protein sequence ID" value="ABM40666.1"/>
    <property type="molecule type" value="Genomic_DNA"/>
</dbReference>
<dbReference type="SMR" id="A1W341"/>
<dbReference type="STRING" id="232721.Ajs_0414"/>
<dbReference type="KEGG" id="ajs:Ajs_0414"/>
<dbReference type="eggNOG" id="COG0792">
    <property type="taxonomic scope" value="Bacteria"/>
</dbReference>
<dbReference type="HOGENOM" id="CLU_115353_1_0_4"/>
<dbReference type="Proteomes" id="UP000000645">
    <property type="component" value="Chromosome"/>
</dbReference>
<dbReference type="GO" id="GO:0003676">
    <property type="term" value="F:nucleic acid binding"/>
    <property type="evidence" value="ECO:0007669"/>
    <property type="project" value="InterPro"/>
</dbReference>
<dbReference type="Gene3D" id="3.40.1350.10">
    <property type="match status" value="1"/>
</dbReference>
<dbReference type="HAMAP" id="MF_00048">
    <property type="entry name" value="UPF0102"/>
    <property type="match status" value="1"/>
</dbReference>
<dbReference type="InterPro" id="IPR011335">
    <property type="entry name" value="Restrct_endonuc-II-like"/>
</dbReference>
<dbReference type="InterPro" id="IPR011856">
    <property type="entry name" value="tRNA_endonuc-like_dom_sf"/>
</dbReference>
<dbReference type="InterPro" id="IPR003509">
    <property type="entry name" value="UPF0102_YraN-like"/>
</dbReference>
<dbReference type="NCBIfam" id="NF009150">
    <property type="entry name" value="PRK12497.1-3"/>
    <property type="match status" value="1"/>
</dbReference>
<dbReference type="NCBIfam" id="TIGR00252">
    <property type="entry name" value="YraN family protein"/>
    <property type="match status" value="1"/>
</dbReference>
<dbReference type="PANTHER" id="PTHR34039">
    <property type="entry name" value="UPF0102 PROTEIN YRAN"/>
    <property type="match status" value="1"/>
</dbReference>
<dbReference type="PANTHER" id="PTHR34039:SF1">
    <property type="entry name" value="UPF0102 PROTEIN YRAN"/>
    <property type="match status" value="1"/>
</dbReference>
<dbReference type="Pfam" id="PF02021">
    <property type="entry name" value="UPF0102"/>
    <property type="match status" value="1"/>
</dbReference>
<dbReference type="SUPFAM" id="SSF52980">
    <property type="entry name" value="Restriction endonuclease-like"/>
    <property type="match status" value="1"/>
</dbReference>
<sequence>MGFLGKKVNGSAPARTTRAAGQAGEDRALAHLTAAGLALVERNYRTPGRGGGEIDLILRERDGTLVFVEVRSRGASAYGGAGGSIGVAKQRRIVFAAQHYLLRWPAPPPCRFDAVLIEGDRLQWLRGAFDAA</sequence>
<reference key="1">
    <citation type="submission" date="2006-12" db="EMBL/GenBank/DDBJ databases">
        <title>Complete sequence of chromosome 1 of Acidovorax sp. JS42.</title>
        <authorList>
            <person name="Copeland A."/>
            <person name="Lucas S."/>
            <person name="Lapidus A."/>
            <person name="Barry K."/>
            <person name="Detter J.C."/>
            <person name="Glavina del Rio T."/>
            <person name="Dalin E."/>
            <person name="Tice H."/>
            <person name="Pitluck S."/>
            <person name="Chertkov O."/>
            <person name="Brettin T."/>
            <person name="Bruce D."/>
            <person name="Han C."/>
            <person name="Tapia R."/>
            <person name="Gilna P."/>
            <person name="Schmutz J."/>
            <person name="Larimer F."/>
            <person name="Land M."/>
            <person name="Hauser L."/>
            <person name="Kyrpides N."/>
            <person name="Kim E."/>
            <person name="Stahl D."/>
            <person name="Richardson P."/>
        </authorList>
    </citation>
    <scope>NUCLEOTIDE SEQUENCE [LARGE SCALE GENOMIC DNA]</scope>
    <source>
        <strain>JS42</strain>
    </source>
</reference>
<evidence type="ECO:0000255" key="1">
    <source>
        <dbReference type="HAMAP-Rule" id="MF_00048"/>
    </source>
</evidence>
<evidence type="ECO:0000256" key="2">
    <source>
        <dbReference type="SAM" id="MobiDB-lite"/>
    </source>
</evidence>
<gene>
    <name type="ordered locus">Ajs_0414</name>
</gene>
<feature type="chain" id="PRO_0000336112" description="UPF0102 protein Ajs_0414">
    <location>
        <begin position="1"/>
        <end position="132"/>
    </location>
</feature>
<feature type="region of interest" description="Disordered" evidence="2">
    <location>
        <begin position="1"/>
        <end position="23"/>
    </location>
</feature>
<name>Y414_ACISJ</name>